<evidence type="ECO:0000255" key="1">
    <source>
        <dbReference type="HAMAP-Rule" id="MF_01619"/>
    </source>
</evidence>
<accession>B7MUR3</accession>
<gene>
    <name evidence="1" type="primary">maeA</name>
    <name type="ordered locus">ECED1_1632</name>
</gene>
<dbReference type="EC" id="1.1.1.38" evidence="1"/>
<dbReference type="EMBL" id="CU928162">
    <property type="protein sequence ID" value="CAR07829.2"/>
    <property type="molecule type" value="Genomic_DNA"/>
</dbReference>
<dbReference type="RefSeq" id="WP_000433464.1">
    <property type="nucleotide sequence ID" value="NC_011745.1"/>
</dbReference>
<dbReference type="SMR" id="B7MUR3"/>
<dbReference type="GeneID" id="93775638"/>
<dbReference type="KEGG" id="ecq:ECED1_1632"/>
<dbReference type="HOGENOM" id="CLU_011405_5_2_6"/>
<dbReference type="Proteomes" id="UP000000748">
    <property type="component" value="Chromosome"/>
</dbReference>
<dbReference type="GO" id="GO:0005829">
    <property type="term" value="C:cytosol"/>
    <property type="evidence" value="ECO:0007669"/>
    <property type="project" value="TreeGrafter"/>
</dbReference>
<dbReference type="GO" id="GO:0004471">
    <property type="term" value="F:malate dehydrogenase (decarboxylating) (NAD+) activity"/>
    <property type="evidence" value="ECO:0007669"/>
    <property type="project" value="UniProtKB-UniRule"/>
</dbReference>
<dbReference type="GO" id="GO:0046872">
    <property type="term" value="F:metal ion binding"/>
    <property type="evidence" value="ECO:0007669"/>
    <property type="project" value="UniProtKB-KW"/>
</dbReference>
<dbReference type="GO" id="GO:0051287">
    <property type="term" value="F:NAD binding"/>
    <property type="evidence" value="ECO:0007669"/>
    <property type="project" value="InterPro"/>
</dbReference>
<dbReference type="GO" id="GO:0008948">
    <property type="term" value="F:oxaloacetate decarboxylase activity"/>
    <property type="evidence" value="ECO:0007669"/>
    <property type="project" value="UniProtKB-UniRule"/>
</dbReference>
<dbReference type="GO" id="GO:0006108">
    <property type="term" value="P:malate metabolic process"/>
    <property type="evidence" value="ECO:0007669"/>
    <property type="project" value="TreeGrafter"/>
</dbReference>
<dbReference type="CDD" id="cd05312">
    <property type="entry name" value="NAD_bind_1_malic_enz"/>
    <property type="match status" value="1"/>
</dbReference>
<dbReference type="FunFam" id="3.40.50.10380:FF:000001">
    <property type="entry name" value="NAD-dependent malic enzyme"/>
    <property type="match status" value="1"/>
</dbReference>
<dbReference type="FunFam" id="3.40.50.720:FF:000055">
    <property type="entry name" value="NAD-dependent malic enzyme"/>
    <property type="match status" value="1"/>
</dbReference>
<dbReference type="Gene3D" id="3.40.50.10380">
    <property type="entry name" value="Malic enzyme, N-terminal domain"/>
    <property type="match status" value="1"/>
</dbReference>
<dbReference type="Gene3D" id="3.40.50.720">
    <property type="entry name" value="NAD(P)-binding Rossmann-like Domain"/>
    <property type="match status" value="1"/>
</dbReference>
<dbReference type="HAMAP" id="MF_01619">
    <property type="entry name" value="NAD_malic_enz"/>
    <property type="match status" value="1"/>
</dbReference>
<dbReference type="InterPro" id="IPR046346">
    <property type="entry name" value="Aminoacid_DH-like_N_sf"/>
</dbReference>
<dbReference type="InterPro" id="IPR015884">
    <property type="entry name" value="Malic_enzyme_CS"/>
</dbReference>
<dbReference type="InterPro" id="IPR012301">
    <property type="entry name" value="Malic_N_dom"/>
</dbReference>
<dbReference type="InterPro" id="IPR037062">
    <property type="entry name" value="Malic_N_dom_sf"/>
</dbReference>
<dbReference type="InterPro" id="IPR012302">
    <property type="entry name" value="Malic_NAD-bd"/>
</dbReference>
<dbReference type="InterPro" id="IPR001891">
    <property type="entry name" value="Malic_OxRdtase"/>
</dbReference>
<dbReference type="InterPro" id="IPR036291">
    <property type="entry name" value="NAD(P)-bd_dom_sf"/>
</dbReference>
<dbReference type="InterPro" id="IPR023667">
    <property type="entry name" value="NAD_malic_enz_proteobac"/>
</dbReference>
<dbReference type="NCBIfam" id="NF010052">
    <property type="entry name" value="PRK13529.1"/>
    <property type="match status" value="1"/>
</dbReference>
<dbReference type="PANTHER" id="PTHR23406">
    <property type="entry name" value="MALIC ENZYME-RELATED"/>
    <property type="match status" value="1"/>
</dbReference>
<dbReference type="PANTHER" id="PTHR23406:SF34">
    <property type="entry name" value="NAD-DEPENDENT MALIC ENZYME, MITOCHONDRIAL"/>
    <property type="match status" value="1"/>
</dbReference>
<dbReference type="Pfam" id="PF00390">
    <property type="entry name" value="malic"/>
    <property type="match status" value="1"/>
</dbReference>
<dbReference type="Pfam" id="PF03949">
    <property type="entry name" value="Malic_M"/>
    <property type="match status" value="1"/>
</dbReference>
<dbReference type="PIRSF" id="PIRSF000106">
    <property type="entry name" value="ME"/>
    <property type="match status" value="1"/>
</dbReference>
<dbReference type="PRINTS" id="PR00072">
    <property type="entry name" value="MALOXRDTASE"/>
</dbReference>
<dbReference type="SMART" id="SM01274">
    <property type="entry name" value="malic"/>
    <property type="match status" value="1"/>
</dbReference>
<dbReference type="SMART" id="SM00919">
    <property type="entry name" value="Malic_M"/>
    <property type="match status" value="1"/>
</dbReference>
<dbReference type="SUPFAM" id="SSF53223">
    <property type="entry name" value="Aminoacid dehydrogenase-like, N-terminal domain"/>
    <property type="match status" value="1"/>
</dbReference>
<dbReference type="SUPFAM" id="SSF51735">
    <property type="entry name" value="NAD(P)-binding Rossmann-fold domains"/>
    <property type="match status" value="1"/>
</dbReference>
<dbReference type="PROSITE" id="PS00331">
    <property type="entry name" value="MALIC_ENZYMES"/>
    <property type="match status" value="1"/>
</dbReference>
<reference key="1">
    <citation type="journal article" date="2009" name="PLoS Genet.">
        <title>Organised genome dynamics in the Escherichia coli species results in highly diverse adaptive paths.</title>
        <authorList>
            <person name="Touchon M."/>
            <person name="Hoede C."/>
            <person name="Tenaillon O."/>
            <person name="Barbe V."/>
            <person name="Baeriswyl S."/>
            <person name="Bidet P."/>
            <person name="Bingen E."/>
            <person name="Bonacorsi S."/>
            <person name="Bouchier C."/>
            <person name="Bouvet O."/>
            <person name="Calteau A."/>
            <person name="Chiapello H."/>
            <person name="Clermont O."/>
            <person name="Cruveiller S."/>
            <person name="Danchin A."/>
            <person name="Diard M."/>
            <person name="Dossat C."/>
            <person name="Karoui M.E."/>
            <person name="Frapy E."/>
            <person name="Garry L."/>
            <person name="Ghigo J.M."/>
            <person name="Gilles A.M."/>
            <person name="Johnson J."/>
            <person name="Le Bouguenec C."/>
            <person name="Lescat M."/>
            <person name="Mangenot S."/>
            <person name="Martinez-Jehanne V."/>
            <person name="Matic I."/>
            <person name="Nassif X."/>
            <person name="Oztas S."/>
            <person name="Petit M.A."/>
            <person name="Pichon C."/>
            <person name="Rouy Z."/>
            <person name="Ruf C.S."/>
            <person name="Schneider D."/>
            <person name="Tourret J."/>
            <person name="Vacherie B."/>
            <person name="Vallenet D."/>
            <person name="Medigue C."/>
            <person name="Rocha E.P.C."/>
            <person name="Denamur E."/>
        </authorList>
    </citation>
    <scope>NUCLEOTIDE SEQUENCE [LARGE SCALE GENOMIC DNA]</scope>
    <source>
        <strain>ED1a</strain>
    </source>
</reference>
<keyword id="KW-0479">Metal-binding</keyword>
<keyword id="KW-0520">NAD</keyword>
<keyword id="KW-0560">Oxidoreductase</keyword>
<comment type="catalytic activity">
    <reaction evidence="1">
        <text>(S)-malate + NAD(+) = pyruvate + CO2 + NADH</text>
        <dbReference type="Rhea" id="RHEA:12653"/>
        <dbReference type="ChEBI" id="CHEBI:15361"/>
        <dbReference type="ChEBI" id="CHEBI:15589"/>
        <dbReference type="ChEBI" id="CHEBI:16526"/>
        <dbReference type="ChEBI" id="CHEBI:57540"/>
        <dbReference type="ChEBI" id="CHEBI:57945"/>
        <dbReference type="EC" id="1.1.1.38"/>
    </reaction>
</comment>
<comment type="catalytic activity">
    <reaction evidence="1">
        <text>oxaloacetate + H(+) = pyruvate + CO2</text>
        <dbReference type="Rhea" id="RHEA:15641"/>
        <dbReference type="ChEBI" id="CHEBI:15361"/>
        <dbReference type="ChEBI" id="CHEBI:15378"/>
        <dbReference type="ChEBI" id="CHEBI:16452"/>
        <dbReference type="ChEBI" id="CHEBI:16526"/>
        <dbReference type="EC" id="1.1.1.38"/>
    </reaction>
</comment>
<comment type="cofactor">
    <cofactor evidence="1">
        <name>Mg(2+)</name>
        <dbReference type="ChEBI" id="CHEBI:18420"/>
    </cofactor>
    <cofactor evidence="1">
        <name>Mn(2+)</name>
        <dbReference type="ChEBI" id="CHEBI:29035"/>
    </cofactor>
    <text evidence="1">Divalent metal cations. Prefers magnesium or manganese.</text>
</comment>
<comment type="subunit">
    <text evidence="1">Homotetramer.</text>
</comment>
<comment type="similarity">
    <text evidence="1">Belongs to the malic enzymes family.</text>
</comment>
<proteinExistence type="inferred from homology"/>
<protein>
    <recommendedName>
        <fullName evidence="1">NAD-dependent malic enzyme</fullName>
        <shortName evidence="1">NAD-ME</shortName>
        <ecNumber evidence="1">1.1.1.38</ecNumber>
    </recommendedName>
</protein>
<feature type="chain" id="PRO_1000185993" description="NAD-dependent malic enzyme">
    <location>
        <begin position="1"/>
        <end position="565"/>
    </location>
</feature>
<feature type="active site" description="Proton donor" evidence="1">
    <location>
        <position position="104"/>
    </location>
</feature>
<feature type="active site" description="Proton acceptor" evidence="1">
    <location>
        <position position="175"/>
    </location>
</feature>
<feature type="binding site" evidence="1">
    <location>
        <position position="157"/>
    </location>
    <ligand>
        <name>NAD(+)</name>
        <dbReference type="ChEBI" id="CHEBI:57540"/>
    </ligand>
</feature>
<feature type="binding site" evidence="1">
    <location>
        <position position="246"/>
    </location>
    <ligand>
        <name>a divalent metal cation</name>
        <dbReference type="ChEBI" id="CHEBI:60240"/>
    </ligand>
</feature>
<feature type="binding site" evidence="1">
    <location>
        <position position="247"/>
    </location>
    <ligand>
        <name>a divalent metal cation</name>
        <dbReference type="ChEBI" id="CHEBI:60240"/>
    </ligand>
</feature>
<feature type="binding site" evidence="1">
    <location>
        <position position="270"/>
    </location>
    <ligand>
        <name>a divalent metal cation</name>
        <dbReference type="ChEBI" id="CHEBI:60240"/>
    </ligand>
</feature>
<feature type="binding site" evidence="1">
    <location>
        <position position="270"/>
    </location>
    <ligand>
        <name>NAD(+)</name>
        <dbReference type="ChEBI" id="CHEBI:57540"/>
    </ligand>
</feature>
<feature type="binding site" evidence="1">
    <location>
        <position position="418"/>
    </location>
    <ligand>
        <name>NAD(+)</name>
        <dbReference type="ChEBI" id="CHEBI:57540"/>
    </ligand>
</feature>
<feature type="site" description="Important for activity" evidence="1">
    <location>
        <position position="270"/>
    </location>
</feature>
<sequence length="565" mass="63163">MEPKTKKQRSLYIPYAGPVLLEFPLLNKGSAFSMEERRNFNLLGLLPEVVETIEEQAERAWIQYQGFKTEIDKHIYLRNIQDTNETLFYRLVNNHLDEMMPVIYTPTVGAACERFSEIYRRSRGVFISYQNRHNMDDILQNVPNHNIKVIVVTDGERILGLGDQGIGGMGIPIGKLSLYTACGGISPAYTLPVVLDVGTNNQQLLNDPLYMGWRNPRITDDEYYEFVDEFIQAVKQRWPDVLLQFEDFAQKNAMPLLNRYRNEICSFNDDIQGTAAVTVGTLIAASRAAGGQLSEKKIVFLGAGSAGCGIAEMIIAQTQREGLSEEAARQKVFMVDRFGLLTDKMPNLLPFQTKLVQKRENLSDWDTDSDVLSLLDVVRNVKPDILIGVSGQTGLFTEEIIREMHKHCPRPIVMPLSNPTSRVEATPQDIIAWTEGNALVATGSPFNPVVWKDKIYPIAQCNNAFIFPGIGLGVIASGASRITDEMLMSASETLAQYSPLVLNGEGLVLPELKDIQKVSRAIAFAVGKMAQQQGVAVKTSAEALQQAIDDNFWQAEYRDYRRTSI</sequence>
<organism>
    <name type="scientific">Escherichia coli O81 (strain ED1a)</name>
    <dbReference type="NCBI Taxonomy" id="585397"/>
    <lineage>
        <taxon>Bacteria</taxon>
        <taxon>Pseudomonadati</taxon>
        <taxon>Pseudomonadota</taxon>
        <taxon>Gammaproteobacteria</taxon>
        <taxon>Enterobacterales</taxon>
        <taxon>Enterobacteriaceae</taxon>
        <taxon>Escherichia</taxon>
    </lineage>
</organism>
<name>MAO1_ECO81</name>